<name>HEX_PINMG</name>
<organism>
    <name type="scientific">Margaritifera margaritifera</name>
    <name type="common">Freshwater pearl mussel</name>
    <dbReference type="NCBI Taxonomy" id="102329"/>
    <lineage>
        <taxon>Eukaryota</taxon>
        <taxon>Metazoa</taxon>
        <taxon>Spiralia</taxon>
        <taxon>Lophotrochozoa</taxon>
        <taxon>Mollusca</taxon>
        <taxon>Bivalvia</taxon>
        <taxon>Autobranchia</taxon>
        <taxon>Pteriomorphia</taxon>
        <taxon>Pterioida</taxon>
        <taxon>Pterioidea</taxon>
        <taxon>Pteriidae</taxon>
        <taxon>Pinctada</taxon>
    </lineage>
</organism>
<dbReference type="EC" id="3.2.1.52" evidence="1"/>
<dbReference type="EMBL" id="HE610383">
    <property type="protein sequence ID" value="CCE46157.1"/>
    <property type="molecule type" value="mRNA"/>
</dbReference>
<dbReference type="SMR" id="H2A0L6"/>
<dbReference type="CAZy" id="GH20">
    <property type="family name" value="Glycoside Hydrolase Family 20"/>
</dbReference>
<dbReference type="UniPathway" id="UPA00349"/>
<dbReference type="GO" id="GO:0005576">
    <property type="term" value="C:extracellular region"/>
    <property type="evidence" value="ECO:0007669"/>
    <property type="project" value="UniProtKB-SubCell"/>
</dbReference>
<dbReference type="GO" id="GO:0016020">
    <property type="term" value="C:membrane"/>
    <property type="evidence" value="ECO:0007669"/>
    <property type="project" value="TreeGrafter"/>
</dbReference>
<dbReference type="GO" id="GO:0004563">
    <property type="term" value="F:beta-N-acetylhexosaminidase activity"/>
    <property type="evidence" value="ECO:0007669"/>
    <property type="project" value="UniProtKB-EC"/>
</dbReference>
<dbReference type="GO" id="GO:0030247">
    <property type="term" value="F:polysaccharide binding"/>
    <property type="evidence" value="ECO:0007669"/>
    <property type="project" value="InterPro"/>
</dbReference>
<dbReference type="GO" id="GO:0005975">
    <property type="term" value="P:carbohydrate metabolic process"/>
    <property type="evidence" value="ECO:0007669"/>
    <property type="project" value="InterPro"/>
</dbReference>
<dbReference type="GO" id="GO:0006032">
    <property type="term" value="P:chitin catabolic process"/>
    <property type="evidence" value="ECO:0007669"/>
    <property type="project" value="UniProtKB-UniPathway"/>
</dbReference>
<dbReference type="GO" id="GO:0030203">
    <property type="term" value="P:glycosaminoglycan metabolic process"/>
    <property type="evidence" value="ECO:0007669"/>
    <property type="project" value="TreeGrafter"/>
</dbReference>
<dbReference type="Gene3D" id="2.60.40.290">
    <property type="match status" value="1"/>
</dbReference>
<dbReference type="Gene3D" id="3.30.379.10">
    <property type="entry name" value="Chitobiase/beta-hexosaminidase domain 2-like"/>
    <property type="match status" value="1"/>
</dbReference>
<dbReference type="Gene3D" id="3.20.20.80">
    <property type="entry name" value="Glycosidases"/>
    <property type="match status" value="1"/>
</dbReference>
<dbReference type="InterPro" id="IPR025705">
    <property type="entry name" value="Beta_hexosaminidase_sua/sub"/>
</dbReference>
<dbReference type="InterPro" id="IPR008965">
    <property type="entry name" value="CBM2/CBM3_carb-bd_dom_sf"/>
</dbReference>
<dbReference type="InterPro" id="IPR012291">
    <property type="entry name" value="CBM2_carb-bd_dom_sf"/>
</dbReference>
<dbReference type="InterPro" id="IPR004866">
    <property type="entry name" value="CHB/HEX_N_dom"/>
</dbReference>
<dbReference type="InterPro" id="IPR015883">
    <property type="entry name" value="Glyco_hydro_20_cat"/>
</dbReference>
<dbReference type="InterPro" id="IPR017853">
    <property type="entry name" value="Glycoside_hydrolase_SF"/>
</dbReference>
<dbReference type="InterPro" id="IPR029018">
    <property type="entry name" value="Hex-like_dom2"/>
</dbReference>
<dbReference type="PANTHER" id="PTHR22600">
    <property type="entry name" value="BETA-HEXOSAMINIDASE"/>
    <property type="match status" value="1"/>
</dbReference>
<dbReference type="PANTHER" id="PTHR22600:SF57">
    <property type="entry name" value="BETA-N-ACETYLHEXOSAMINIDASE"/>
    <property type="match status" value="1"/>
</dbReference>
<dbReference type="Pfam" id="PF03173">
    <property type="entry name" value="CHB_HEX"/>
    <property type="match status" value="1"/>
</dbReference>
<dbReference type="Pfam" id="PF00728">
    <property type="entry name" value="Glyco_hydro_20"/>
    <property type="match status" value="1"/>
</dbReference>
<dbReference type="PRINTS" id="PR00738">
    <property type="entry name" value="GLHYDRLASE20"/>
</dbReference>
<dbReference type="SMART" id="SM01081">
    <property type="entry name" value="CHB_HEX"/>
    <property type="match status" value="1"/>
</dbReference>
<dbReference type="SUPFAM" id="SSF51445">
    <property type="entry name" value="(Trans)glycosidases"/>
    <property type="match status" value="1"/>
</dbReference>
<dbReference type="SUPFAM" id="SSF55545">
    <property type="entry name" value="beta-N-acetylhexosaminidase-like domain"/>
    <property type="match status" value="1"/>
</dbReference>
<dbReference type="SUPFAM" id="SSF49384">
    <property type="entry name" value="Carbohydrate-binding domain"/>
    <property type="match status" value="1"/>
</dbReference>
<keyword id="KW-0903">Direct protein sequencing</keyword>
<keyword id="KW-0378">Hydrolase</keyword>
<keyword id="KW-0964">Secreted</keyword>
<keyword id="KW-0732">Signal</keyword>
<protein>
    <recommendedName>
        <fullName evidence="1">Putative beta-hexosaminidase</fullName>
        <ecNumber evidence="1">3.2.1.52</ecNumber>
    </recommendedName>
    <alternativeName>
        <fullName evidence="1">Beta-N-acetylhexosaminidase</fullName>
    </alternativeName>
    <alternativeName>
        <fullName evidence="1">Chitobiase</fullName>
    </alternativeName>
    <alternativeName>
        <fullName evidence="1">N-acetyl-beta-glucosaminidase</fullName>
    </alternativeName>
</protein>
<accession>H2A0L6</accession>
<proteinExistence type="evidence at protein level"/>
<reference evidence="5" key="1">
    <citation type="journal article" date="2010" name="BMC Genomics">
        <title>Transcriptome and proteome analysis of Pinctada margaritifera calcifying mantle and shell: focus on biomineralization.</title>
        <authorList>
            <person name="Joubert C."/>
            <person name="Piquemal D."/>
            <person name="Marie B."/>
            <person name="Manchon L."/>
            <person name="Pierrat F."/>
            <person name="Zanella-Cleon I."/>
            <person name="Cochennec-Laureau N."/>
            <person name="Gueguen Y."/>
            <person name="Montagnani C."/>
        </authorList>
    </citation>
    <scope>NUCLEOTIDE SEQUENCE [MRNA]</scope>
    <scope>IDENTIFICATION</scope>
    <source>
        <tissue>Mantle</tissue>
    </source>
</reference>
<reference key="2">
    <citation type="journal article" date="2012" name="Proc. Natl. Acad. Sci. U.S.A.">
        <title>Different secretory repertoires control the biomineralization processes of prism and nacre deposition of the pearl oyster shell.</title>
        <authorList>
            <person name="Marie B."/>
            <person name="Joubert C."/>
            <person name="Tayale A."/>
            <person name="Zanella-Cleon I."/>
            <person name="Belliard C."/>
            <person name="Piquemal D."/>
            <person name="Cochennec-Laureau N."/>
            <person name="Marin F."/>
            <person name="Gueguen Y."/>
            <person name="Montagnani C."/>
        </authorList>
    </citation>
    <scope>PROTEIN SEQUENCE OF 259-266</scope>
    <scope>SUBCELLULAR LOCATION</scope>
    <scope>TISSUE SPECIFICITY</scope>
    <source>
        <tissue>Shell</tissue>
    </source>
</reference>
<sequence>MKWVKSGVGILGILLTICHAVTSQGHILDITDSLKITFKTLSNFGPRAQSIQNVTIENVGIKDIPDSGWRCYFCHDQLLFPGTFNLARNQYFLRPILDNYVVLSDGFLLEFIKGCMYRITPIPRNAPIKTRDKREFTLLAEQFSVSKYDSFPKWYCETISGGNTEVGIIRNTENLKYVEDFDSSYNWFRIPHDFRSVPLQPQDRFSANHKASSVDECKYKVIPTPVKASVSKVQRNFGTTVYYGTTDTSIRGREKLFKVAEQLALKHNLGLVEITPGLTVNNGISLVVTGNYVERNIPSPDEAYSLTVTADLISIEAPALPGLINGIETIHSLSAWDMALPYGGIKDFPRFPFRGIFLDIASNFPGYNYIKKFLTVMAQYKLNKLVLPMYNNEGFRLQLNDSPRYEFQALHMIGGKRCHDLKEEKCLFSQLGSGPDSSGGYLTKAQMTDLIKTADLLNIEIIMSMNIGESARGAIVPLKQSPHSRLLYDPDDTDFVDRFYPQKDTSMNPCREETTYFYDHMLKQLKDIYNAASVPLKTIMIGSKVNFDQVLNSKYCYASNLNSTQRLMARGNLERNINGFKLNFTKRLVKTAHDNGIKEVMAIDDVFTTEFDAEGNTPNTVYDTKNSDNSTRFNATVTAVHSRYDTVRDERLWKRGDRFAELGYKVILSPPILDFNYAVEPDPDRPGDYDSVIRNISFSKLFRFVPDSRCCNIPNAIQHDCALESDCTTAGAKDSYIGTLGKLDTRKLRSLKDWNELLFPRLLIFAERSWHKSSWEDSFGPHRASVNNITRQLITNYTVPNWNDINNEESKVLGCISRKEKLRLMHEDGLKPYVEPPGARLLGGNTMRIAASTTEDSFWVQASVNGNPWTDNVKILDVNPTDSVRLRTVHPAKAELRSKEVKLNLTSLPTPRERFRKIAQDALSRRIGIDIQRARMPPMPVNPAYRPPVPLPSFDPADDRAPDLAAIAAAHPPPLPPGMPSHMMPNMPPPFPPRPPFGPPMLPPGQMRALGQQAGQALRGQGTALGPQTGQQPMPAQPRGPLTGQAAGTGVAGQTGQQPSTAGQGTQQGLPGQQRGGVLPGQWPFFPGMPAAQFPPMFNPQMQRALQMRGQGQIPQRTQGAAAGAGQSRIPQQAG</sequence>
<evidence type="ECO:0000250" key="1">
    <source>
        <dbReference type="UniProtKB" id="Q04786"/>
    </source>
</evidence>
<evidence type="ECO:0000255" key="2"/>
<evidence type="ECO:0000256" key="3">
    <source>
        <dbReference type="SAM" id="MobiDB-lite"/>
    </source>
</evidence>
<evidence type="ECO:0000269" key="4">
    <source>
    </source>
</evidence>
<evidence type="ECO:0000305" key="5"/>
<comment type="catalytic activity">
    <reaction evidence="1">
        <text>Hydrolysis of terminal non-reducing N-acetyl-D-hexosamine residues in N-acetyl-beta-D-hexosaminides.</text>
        <dbReference type="EC" id="3.2.1.52"/>
    </reaction>
</comment>
<comment type="pathway">
    <text evidence="1">Glycan degradation; chitin degradation.</text>
</comment>
<comment type="subcellular location">
    <subcellularLocation>
        <location evidence="4">Secreted</location>
    </subcellularLocation>
</comment>
<comment type="tissue specificity">
    <text evidence="4">Prismatic layer of shell (at protein level). Expressed primarily in the mantle with highest level in the mantle edge and lower level in the mantle pallium.</text>
</comment>
<comment type="similarity">
    <text evidence="2">Belongs to the glycosyl hydrolase 20 family.</text>
</comment>
<feature type="signal peptide" evidence="2">
    <location>
        <begin position="1"/>
        <end position="23"/>
    </location>
</feature>
<feature type="chain" id="PRO_0000418019" description="Putative beta-hexosaminidase" evidence="2">
    <location>
        <begin position="24"/>
        <end position="1135"/>
    </location>
</feature>
<feature type="region of interest" description="Disordered" evidence="3">
    <location>
        <begin position="970"/>
        <end position="1082"/>
    </location>
</feature>
<feature type="region of interest" description="Disordered" evidence="3">
    <location>
        <begin position="1107"/>
        <end position="1135"/>
    </location>
</feature>
<feature type="compositionally biased region" description="Pro residues" evidence="3">
    <location>
        <begin position="986"/>
        <end position="1003"/>
    </location>
</feature>
<feature type="compositionally biased region" description="Low complexity" evidence="3">
    <location>
        <begin position="1004"/>
        <end position="1026"/>
    </location>
</feature>
<feature type="compositionally biased region" description="Low complexity" evidence="3">
    <location>
        <begin position="1043"/>
        <end position="1073"/>
    </location>
</feature>